<name>UGPC_ECOL5</name>
<reference key="1">
    <citation type="journal article" date="2006" name="Mol. Microbiol.">
        <title>Role of pathogenicity island-associated integrases in the genome plasticity of uropathogenic Escherichia coli strain 536.</title>
        <authorList>
            <person name="Hochhut B."/>
            <person name="Wilde C."/>
            <person name="Balling G."/>
            <person name="Middendorf B."/>
            <person name="Dobrindt U."/>
            <person name="Brzuszkiewicz E."/>
            <person name="Gottschalk G."/>
            <person name="Carniel E."/>
            <person name="Hacker J."/>
        </authorList>
    </citation>
    <scope>NUCLEOTIDE SEQUENCE [LARGE SCALE GENOMIC DNA]</scope>
    <source>
        <strain>536 / UPEC</strain>
    </source>
</reference>
<keyword id="KW-0067">ATP-binding</keyword>
<keyword id="KW-0997">Cell inner membrane</keyword>
<keyword id="KW-1003">Cell membrane</keyword>
<keyword id="KW-0472">Membrane</keyword>
<keyword id="KW-0547">Nucleotide-binding</keyword>
<keyword id="KW-0762">Sugar transport</keyword>
<keyword id="KW-1278">Translocase</keyword>
<keyword id="KW-0813">Transport</keyword>
<accession>Q0TC10</accession>
<gene>
    <name evidence="1" type="primary">ugpC</name>
    <name type="ordered locus">ECP_3543</name>
</gene>
<dbReference type="EC" id="7.6.2.10" evidence="1"/>
<dbReference type="EMBL" id="CP000247">
    <property type="protein sequence ID" value="ABG71519.1"/>
    <property type="molecule type" value="Genomic_DNA"/>
</dbReference>
<dbReference type="RefSeq" id="WP_000907825.1">
    <property type="nucleotide sequence ID" value="NC_008253.1"/>
</dbReference>
<dbReference type="SMR" id="Q0TC10"/>
<dbReference type="KEGG" id="ecp:ECP_3543"/>
<dbReference type="HOGENOM" id="CLU_000604_1_1_6"/>
<dbReference type="Proteomes" id="UP000009182">
    <property type="component" value="Chromosome"/>
</dbReference>
<dbReference type="GO" id="GO:0055052">
    <property type="term" value="C:ATP-binding cassette (ABC) transporter complex, substrate-binding subunit-containing"/>
    <property type="evidence" value="ECO:0007669"/>
    <property type="project" value="TreeGrafter"/>
</dbReference>
<dbReference type="GO" id="GO:0015430">
    <property type="term" value="F:ABC-type glycerol-3-phosphate transporter activity"/>
    <property type="evidence" value="ECO:0007669"/>
    <property type="project" value="UniProtKB-EC"/>
</dbReference>
<dbReference type="GO" id="GO:0005524">
    <property type="term" value="F:ATP binding"/>
    <property type="evidence" value="ECO:0007669"/>
    <property type="project" value="UniProtKB-KW"/>
</dbReference>
<dbReference type="GO" id="GO:0016887">
    <property type="term" value="F:ATP hydrolysis activity"/>
    <property type="evidence" value="ECO:0007669"/>
    <property type="project" value="InterPro"/>
</dbReference>
<dbReference type="GO" id="GO:0008643">
    <property type="term" value="P:carbohydrate transport"/>
    <property type="evidence" value="ECO:0007669"/>
    <property type="project" value="InterPro"/>
</dbReference>
<dbReference type="GO" id="GO:0001407">
    <property type="term" value="P:glycerophosphodiester transmembrane transport"/>
    <property type="evidence" value="ECO:0007669"/>
    <property type="project" value="TreeGrafter"/>
</dbReference>
<dbReference type="CDD" id="cd03301">
    <property type="entry name" value="ABC_MalK_N"/>
    <property type="match status" value="1"/>
</dbReference>
<dbReference type="FunFam" id="3.40.50.300:FF:000042">
    <property type="entry name" value="Maltose/maltodextrin ABC transporter, ATP-binding protein"/>
    <property type="match status" value="1"/>
</dbReference>
<dbReference type="FunFam" id="2.40.50.100:FF:000032">
    <property type="entry name" value="sn-glycerol-3-phosphate import ATP-binding protein UgpC"/>
    <property type="match status" value="1"/>
</dbReference>
<dbReference type="FunFam" id="2.40.50.140:FF:000142">
    <property type="entry name" value="sn-glycerol-3-phosphate import ATP-binding protein UgpC"/>
    <property type="match status" value="1"/>
</dbReference>
<dbReference type="Gene3D" id="2.40.50.100">
    <property type="match status" value="1"/>
</dbReference>
<dbReference type="Gene3D" id="2.40.50.140">
    <property type="entry name" value="Nucleic acid-binding proteins"/>
    <property type="match status" value="1"/>
</dbReference>
<dbReference type="Gene3D" id="3.40.50.300">
    <property type="entry name" value="P-loop containing nucleotide triphosphate hydrolases"/>
    <property type="match status" value="1"/>
</dbReference>
<dbReference type="InterPro" id="IPR003593">
    <property type="entry name" value="AAA+_ATPase"/>
</dbReference>
<dbReference type="InterPro" id="IPR003439">
    <property type="entry name" value="ABC_transporter-like_ATP-bd"/>
</dbReference>
<dbReference type="InterPro" id="IPR017871">
    <property type="entry name" value="ABC_transporter-like_CS"/>
</dbReference>
<dbReference type="InterPro" id="IPR015855">
    <property type="entry name" value="ABC_transpr_MalK-like"/>
</dbReference>
<dbReference type="InterPro" id="IPR047641">
    <property type="entry name" value="ABC_transpr_MalK/UgpC-like"/>
</dbReference>
<dbReference type="InterPro" id="IPR008995">
    <property type="entry name" value="Mo/tungstate-bd_C_term_dom"/>
</dbReference>
<dbReference type="InterPro" id="IPR012340">
    <property type="entry name" value="NA-bd_OB-fold"/>
</dbReference>
<dbReference type="InterPro" id="IPR040582">
    <property type="entry name" value="OB_MalK-like"/>
</dbReference>
<dbReference type="InterPro" id="IPR027417">
    <property type="entry name" value="P-loop_NTPase"/>
</dbReference>
<dbReference type="NCBIfam" id="NF008653">
    <property type="entry name" value="PRK11650.1"/>
    <property type="match status" value="1"/>
</dbReference>
<dbReference type="PANTHER" id="PTHR43875">
    <property type="entry name" value="MALTODEXTRIN IMPORT ATP-BINDING PROTEIN MSMX"/>
    <property type="match status" value="1"/>
</dbReference>
<dbReference type="PANTHER" id="PTHR43875:SF12">
    <property type="entry name" value="SN-GLYCEROL-3-PHOSPHATE IMPORT ATP-BINDING PROTEIN UGPC"/>
    <property type="match status" value="1"/>
</dbReference>
<dbReference type="Pfam" id="PF00005">
    <property type="entry name" value="ABC_tran"/>
    <property type="match status" value="1"/>
</dbReference>
<dbReference type="Pfam" id="PF17912">
    <property type="entry name" value="OB_MalK"/>
    <property type="match status" value="1"/>
</dbReference>
<dbReference type="SMART" id="SM00382">
    <property type="entry name" value="AAA"/>
    <property type="match status" value="1"/>
</dbReference>
<dbReference type="SUPFAM" id="SSF50331">
    <property type="entry name" value="MOP-like"/>
    <property type="match status" value="1"/>
</dbReference>
<dbReference type="SUPFAM" id="SSF52540">
    <property type="entry name" value="P-loop containing nucleoside triphosphate hydrolases"/>
    <property type="match status" value="1"/>
</dbReference>
<dbReference type="PROSITE" id="PS00211">
    <property type="entry name" value="ABC_TRANSPORTER_1"/>
    <property type="match status" value="1"/>
</dbReference>
<dbReference type="PROSITE" id="PS50893">
    <property type="entry name" value="ABC_TRANSPORTER_2"/>
    <property type="match status" value="1"/>
</dbReference>
<dbReference type="PROSITE" id="PS51315">
    <property type="entry name" value="UGPC"/>
    <property type="match status" value="1"/>
</dbReference>
<protein>
    <recommendedName>
        <fullName evidence="1">sn-glycerol-3-phosphate import ATP-binding protein UgpC</fullName>
        <ecNumber evidence="1">7.6.2.10</ecNumber>
    </recommendedName>
</protein>
<organism>
    <name type="scientific">Escherichia coli O6:K15:H31 (strain 536 / UPEC)</name>
    <dbReference type="NCBI Taxonomy" id="362663"/>
    <lineage>
        <taxon>Bacteria</taxon>
        <taxon>Pseudomonadati</taxon>
        <taxon>Pseudomonadota</taxon>
        <taxon>Gammaproteobacteria</taxon>
        <taxon>Enterobacterales</taxon>
        <taxon>Enterobacteriaceae</taxon>
        <taxon>Escherichia</taxon>
    </lineage>
</organism>
<sequence>MAGLKLQAVTKSWDGKTQVIKPLTLDVADGEFIVMVGPSGCGKSTLLRMVAGLERVTTGDIWIDRKRVTEMEPKDRGIAMVFQNYALYPHMSVEENMAWGLKIRGMGKQQIAERVKEAARILELDGLLKRRPRELSGGQRQRVAMGRAIVREPAVFLFDEPLSNLDAKLRVQMRLELQQLHRRLKTTSLYVTHDQVEAMTLAQRVMVMNGGVAEQIGTPVEVYEKPASLFVASFIGSPAMNLLAGRVNNEGTHFELDGGITLLLNGGYRQYAGRKMTLGIRPEHIALSSRAEGGVPLVMDTLEILGADNLAHGRWGEQKLVVRLAHQERPTAGSTLWLHLPENQLHLFDGETGQRV</sequence>
<feature type="chain" id="PRO_0000289754" description="sn-glycerol-3-phosphate import ATP-binding protein UgpC">
    <location>
        <begin position="1"/>
        <end position="356"/>
    </location>
</feature>
<feature type="domain" description="ABC transporter" evidence="1">
    <location>
        <begin position="4"/>
        <end position="235"/>
    </location>
</feature>
<feature type="binding site" evidence="1">
    <location>
        <begin position="37"/>
        <end position="44"/>
    </location>
    <ligand>
        <name>ATP</name>
        <dbReference type="ChEBI" id="CHEBI:30616"/>
    </ligand>
</feature>
<proteinExistence type="inferred from homology"/>
<evidence type="ECO:0000255" key="1">
    <source>
        <dbReference type="HAMAP-Rule" id="MF_01727"/>
    </source>
</evidence>
<comment type="function">
    <text evidence="1">Part of the ABC transporter complex UgpBAEC involved in sn-glycerol-3-phosphate (G3P) import. Responsible for energy coupling to the transport system.</text>
</comment>
<comment type="catalytic activity">
    <reaction evidence="1">
        <text>sn-glycerol 3-phosphate(out) + ATP + H2O = sn-glycerol 3-phosphate(in) + ADP + phosphate + H(+)</text>
        <dbReference type="Rhea" id="RHEA:21668"/>
        <dbReference type="ChEBI" id="CHEBI:15377"/>
        <dbReference type="ChEBI" id="CHEBI:15378"/>
        <dbReference type="ChEBI" id="CHEBI:30616"/>
        <dbReference type="ChEBI" id="CHEBI:43474"/>
        <dbReference type="ChEBI" id="CHEBI:57597"/>
        <dbReference type="ChEBI" id="CHEBI:456216"/>
        <dbReference type="EC" id="7.6.2.10"/>
    </reaction>
</comment>
<comment type="subunit">
    <text evidence="1">The complex is composed of two ATP-binding proteins (UgpC), two transmembrane proteins (UgpA and UgpE) and a solute-binding protein (UgpB).</text>
</comment>
<comment type="subcellular location">
    <subcellularLocation>
        <location evidence="1">Cell inner membrane</location>
        <topology evidence="1">Peripheral membrane protein</topology>
    </subcellularLocation>
</comment>
<comment type="similarity">
    <text evidence="1">Belongs to the ABC transporter superfamily. sn-glycerol-3-phosphate importer (TC 3.A.1.1.3) family.</text>
</comment>